<sequence length="427" mass="45349">MLTARSKDLFTQAQEFIPGGVNSPVRAFKSVGADPLFIKKAFGCTITDADNNSYIDYVGSWGPMILGHCHPQVVEAVKRAVESGSSFGAPTELEITLARMVIDAVPSIEMVRMVSSGTEATMSAIRLARGYTGRDKIIKFSGCYHGHADALLVKAGSGAATFGVPDSPGVPVDVAKNTLTAQFNDLDSVSKLIDENKNEIACIIVEPIAGNMGTVPPGEGFLEGLRSICDSEGIVLIFDEVMTGFRVAYGGAQELYGVTPDMTTLGKIIGGGLPVGAFGGKKDIMKLLSPSGGVYQAGTLSGNPLAMTAGIETLKLLQADGFYEQLEQTSRRLAEGITEAAKSAGYPIYPTRVGSMFCTFFTSNEVKDWPTATTCDTKAFAAFFRMMLEKGIYLAPSQFETAFVSIAHTEVEIEKTIVAARSCFAAL</sequence>
<evidence type="ECO:0000255" key="1">
    <source>
        <dbReference type="HAMAP-Rule" id="MF_00375"/>
    </source>
</evidence>
<keyword id="KW-0963">Cytoplasm</keyword>
<keyword id="KW-0413">Isomerase</keyword>
<keyword id="KW-0627">Porphyrin biosynthesis</keyword>
<keyword id="KW-0663">Pyridoxal phosphate</keyword>
<keyword id="KW-1185">Reference proteome</keyword>
<reference key="1">
    <citation type="journal article" date="2003" name="Science">
        <title>Genome of Geobacter sulfurreducens: metal reduction in subsurface environments.</title>
        <authorList>
            <person name="Methe B.A."/>
            <person name="Nelson K.E."/>
            <person name="Eisen J.A."/>
            <person name="Paulsen I.T."/>
            <person name="Nelson W.C."/>
            <person name="Heidelberg J.F."/>
            <person name="Wu D."/>
            <person name="Wu M."/>
            <person name="Ward N.L."/>
            <person name="Beanan M.J."/>
            <person name="Dodson R.J."/>
            <person name="Madupu R."/>
            <person name="Brinkac L.M."/>
            <person name="Daugherty S.C."/>
            <person name="DeBoy R.T."/>
            <person name="Durkin A.S."/>
            <person name="Gwinn M.L."/>
            <person name="Kolonay J.F."/>
            <person name="Sullivan S.A."/>
            <person name="Haft D.H."/>
            <person name="Selengut J."/>
            <person name="Davidsen T.M."/>
            <person name="Zafar N."/>
            <person name="White O."/>
            <person name="Tran B."/>
            <person name="Romero C."/>
            <person name="Forberger H.A."/>
            <person name="Weidman J.F."/>
            <person name="Khouri H.M."/>
            <person name="Feldblyum T.V."/>
            <person name="Utterback T.R."/>
            <person name="Van Aken S.E."/>
            <person name="Lovley D.R."/>
            <person name="Fraser C.M."/>
        </authorList>
    </citation>
    <scope>NUCLEOTIDE SEQUENCE [LARGE SCALE GENOMIC DNA]</scope>
    <source>
        <strain>ATCC 51573 / DSM 12127 / PCA</strain>
    </source>
</reference>
<accession>Q74GA9</accession>
<gene>
    <name evidence="1" type="primary">hemL</name>
    <name type="ordered locus">GSU0337</name>
</gene>
<name>GSA_GEOSL</name>
<protein>
    <recommendedName>
        <fullName evidence="1">Glutamate-1-semialdehyde 2,1-aminomutase</fullName>
        <shortName evidence="1">GSA</shortName>
        <ecNumber evidence="1">5.4.3.8</ecNumber>
    </recommendedName>
    <alternativeName>
        <fullName evidence="1">Glutamate-1-semialdehyde aminotransferase</fullName>
        <shortName evidence="1">GSA-AT</shortName>
    </alternativeName>
</protein>
<dbReference type="EC" id="5.4.3.8" evidence="1"/>
<dbReference type="EMBL" id="AE017180">
    <property type="protein sequence ID" value="AAR33670.1"/>
    <property type="molecule type" value="Genomic_DNA"/>
</dbReference>
<dbReference type="RefSeq" id="NP_951397.1">
    <property type="nucleotide sequence ID" value="NC_002939.5"/>
</dbReference>
<dbReference type="RefSeq" id="WP_010941005.1">
    <property type="nucleotide sequence ID" value="NC_002939.5"/>
</dbReference>
<dbReference type="SMR" id="Q74GA9"/>
<dbReference type="FunCoup" id="Q74GA9">
    <property type="interactions" value="582"/>
</dbReference>
<dbReference type="STRING" id="243231.GSU0337"/>
<dbReference type="EnsemblBacteria" id="AAR33670">
    <property type="protein sequence ID" value="AAR33670"/>
    <property type="gene ID" value="GSU0337"/>
</dbReference>
<dbReference type="KEGG" id="gsu:GSU0337"/>
<dbReference type="PATRIC" id="fig|243231.5.peg.334"/>
<dbReference type="eggNOG" id="COG0001">
    <property type="taxonomic scope" value="Bacteria"/>
</dbReference>
<dbReference type="HOGENOM" id="CLU_016922_1_5_7"/>
<dbReference type="InParanoid" id="Q74GA9"/>
<dbReference type="OrthoDB" id="9801052at2"/>
<dbReference type="UniPathway" id="UPA00251">
    <property type="reaction ID" value="UER00317"/>
</dbReference>
<dbReference type="Proteomes" id="UP000000577">
    <property type="component" value="Chromosome"/>
</dbReference>
<dbReference type="GO" id="GO:0005737">
    <property type="term" value="C:cytoplasm"/>
    <property type="evidence" value="ECO:0007669"/>
    <property type="project" value="UniProtKB-SubCell"/>
</dbReference>
<dbReference type="GO" id="GO:0042286">
    <property type="term" value="F:glutamate-1-semialdehyde 2,1-aminomutase activity"/>
    <property type="evidence" value="ECO:0007669"/>
    <property type="project" value="UniProtKB-UniRule"/>
</dbReference>
<dbReference type="GO" id="GO:0030170">
    <property type="term" value="F:pyridoxal phosphate binding"/>
    <property type="evidence" value="ECO:0007669"/>
    <property type="project" value="InterPro"/>
</dbReference>
<dbReference type="GO" id="GO:0008483">
    <property type="term" value="F:transaminase activity"/>
    <property type="evidence" value="ECO:0007669"/>
    <property type="project" value="InterPro"/>
</dbReference>
<dbReference type="GO" id="GO:0006782">
    <property type="term" value="P:protoporphyrinogen IX biosynthetic process"/>
    <property type="evidence" value="ECO:0007669"/>
    <property type="project" value="UniProtKB-UniRule"/>
</dbReference>
<dbReference type="CDD" id="cd00610">
    <property type="entry name" value="OAT_like"/>
    <property type="match status" value="1"/>
</dbReference>
<dbReference type="FunFam" id="3.40.640.10:FF:000021">
    <property type="entry name" value="Glutamate-1-semialdehyde 2,1-aminomutase"/>
    <property type="match status" value="1"/>
</dbReference>
<dbReference type="Gene3D" id="3.90.1150.10">
    <property type="entry name" value="Aspartate Aminotransferase, domain 1"/>
    <property type="match status" value="1"/>
</dbReference>
<dbReference type="Gene3D" id="3.40.640.10">
    <property type="entry name" value="Type I PLP-dependent aspartate aminotransferase-like (Major domain)"/>
    <property type="match status" value="1"/>
</dbReference>
<dbReference type="HAMAP" id="MF_00375">
    <property type="entry name" value="HemL_aminotrans_3"/>
    <property type="match status" value="1"/>
</dbReference>
<dbReference type="InterPro" id="IPR004639">
    <property type="entry name" value="4pyrrol_synth_GluAld_NH2Trfase"/>
</dbReference>
<dbReference type="InterPro" id="IPR005814">
    <property type="entry name" value="Aminotrans_3"/>
</dbReference>
<dbReference type="InterPro" id="IPR049704">
    <property type="entry name" value="Aminotrans_3_PPA_site"/>
</dbReference>
<dbReference type="InterPro" id="IPR015424">
    <property type="entry name" value="PyrdxlP-dep_Trfase"/>
</dbReference>
<dbReference type="InterPro" id="IPR015421">
    <property type="entry name" value="PyrdxlP-dep_Trfase_major"/>
</dbReference>
<dbReference type="InterPro" id="IPR015422">
    <property type="entry name" value="PyrdxlP-dep_Trfase_small"/>
</dbReference>
<dbReference type="NCBIfam" id="TIGR00713">
    <property type="entry name" value="hemL"/>
    <property type="match status" value="1"/>
</dbReference>
<dbReference type="NCBIfam" id="NF000818">
    <property type="entry name" value="PRK00062.1"/>
    <property type="match status" value="1"/>
</dbReference>
<dbReference type="PANTHER" id="PTHR43713">
    <property type="entry name" value="GLUTAMATE-1-SEMIALDEHYDE 2,1-AMINOMUTASE"/>
    <property type="match status" value="1"/>
</dbReference>
<dbReference type="PANTHER" id="PTHR43713:SF3">
    <property type="entry name" value="GLUTAMATE-1-SEMIALDEHYDE 2,1-AMINOMUTASE 1, CHLOROPLASTIC-RELATED"/>
    <property type="match status" value="1"/>
</dbReference>
<dbReference type="Pfam" id="PF00202">
    <property type="entry name" value="Aminotran_3"/>
    <property type="match status" value="1"/>
</dbReference>
<dbReference type="SUPFAM" id="SSF53383">
    <property type="entry name" value="PLP-dependent transferases"/>
    <property type="match status" value="1"/>
</dbReference>
<dbReference type="PROSITE" id="PS00600">
    <property type="entry name" value="AA_TRANSFER_CLASS_3"/>
    <property type="match status" value="1"/>
</dbReference>
<feature type="chain" id="PRO_0000243576" description="Glutamate-1-semialdehyde 2,1-aminomutase">
    <location>
        <begin position="1"/>
        <end position="427"/>
    </location>
</feature>
<feature type="modified residue" description="N6-(pyridoxal phosphate)lysine" evidence="1">
    <location>
        <position position="267"/>
    </location>
</feature>
<organism>
    <name type="scientific">Geobacter sulfurreducens (strain ATCC 51573 / DSM 12127 / PCA)</name>
    <dbReference type="NCBI Taxonomy" id="243231"/>
    <lineage>
        <taxon>Bacteria</taxon>
        <taxon>Pseudomonadati</taxon>
        <taxon>Thermodesulfobacteriota</taxon>
        <taxon>Desulfuromonadia</taxon>
        <taxon>Geobacterales</taxon>
        <taxon>Geobacteraceae</taxon>
        <taxon>Geobacter</taxon>
    </lineage>
</organism>
<proteinExistence type="inferred from homology"/>
<comment type="catalytic activity">
    <reaction evidence="1">
        <text>(S)-4-amino-5-oxopentanoate = 5-aminolevulinate</text>
        <dbReference type="Rhea" id="RHEA:14265"/>
        <dbReference type="ChEBI" id="CHEBI:57501"/>
        <dbReference type="ChEBI" id="CHEBI:356416"/>
        <dbReference type="EC" id="5.4.3.8"/>
    </reaction>
</comment>
<comment type="cofactor">
    <cofactor evidence="1">
        <name>pyridoxal 5'-phosphate</name>
        <dbReference type="ChEBI" id="CHEBI:597326"/>
    </cofactor>
</comment>
<comment type="pathway">
    <text evidence="1">Porphyrin-containing compound metabolism; protoporphyrin-IX biosynthesis; 5-aminolevulinate from L-glutamyl-tRNA(Glu): step 2/2.</text>
</comment>
<comment type="subunit">
    <text evidence="1">Homodimer.</text>
</comment>
<comment type="subcellular location">
    <subcellularLocation>
        <location evidence="1">Cytoplasm</location>
    </subcellularLocation>
</comment>
<comment type="similarity">
    <text evidence="1">Belongs to the class-III pyridoxal-phosphate-dependent aminotransferase family. HemL subfamily.</text>
</comment>